<keyword id="KW-0479">Metal-binding</keyword>
<keyword id="KW-0665">Pyrimidine biosynthesis</keyword>
<keyword id="KW-0862">Zinc</keyword>
<comment type="function">
    <text evidence="1">Involved in allosteric regulation of aspartate carbamoyltransferase.</text>
</comment>
<comment type="cofactor">
    <cofactor evidence="1">
        <name>Zn(2+)</name>
        <dbReference type="ChEBI" id="CHEBI:29105"/>
    </cofactor>
    <text evidence="1">Binds 1 zinc ion per subunit.</text>
</comment>
<comment type="subunit">
    <text evidence="1">Contains catalytic and regulatory chains.</text>
</comment>
<comment type="similarity">
    <text evidence="1">Belongs to the PyrI family.</text>
</comment>
<feature type="chain" id="PRO_0000329094" description="Aspartate carbamoyltransferase regulatory chain">
    <location>
        <begin position="1"/>
        <end position="153"/>
    </location>
</feature>
<feature type="binding site" evidence="1">
    <location>
        <position position="109"/>
    </location>
    <ligand>
        <name>Zn(2+)</name>
        <dbReference type="ChEBI" id="CHEBI:29105"/>
    </ligand>
</feature>
<feature type="binding site" evidence="1">
    <location>
        <position position="114"/>
    </location>
    <ligand>
        <name>Zn(2+)</name>
        <dbReference type="ChEBI" id="CHEBI:29105"/>
    </ligand>
</feature>
<feature type="binding site" evidence="1">
    <location>
        <position position="138"/>
    </location>
    <ligand>
        <name>Zn(2+)</name>
        <dbReference type="ChEBI" id="CHEBI:29105"/>
    </ligand>
</feature>
<feature type="binding site" evidence="1">
    <location>
        <position position="141"/>
    </location>
    <ligand>
        <name>Zn(2+)</name>
        <dbReference type="ChEBI" id="CHEBI:29105"/>
    </ligand>
</feature>
<reference key="1">
    <citation type="journal article" date="2010" name="PLoS Genet.">
        <title>Genome sequence of the plant growth promoting endophytic bacterium Enterobacter sp. 638.</title>
        <authorList>
            <person name="Taghavi S."/>
            <person name="van der Lelie D."/>
            <person name="Hoffman A."/>
            <person name="Zhang Y.B."/>
            <person name="Walla M.D."/>
            <person name="Vangronsveld J."/>
            <person name="Newman L."/>
            <person name="Monchy S."/>
        </authorList>
    </citation>
    <scope>NUCLEOTIDE SEQUENCE [LARGE SCALE GENOMIC DNA]</scope>
    <source>
        <strain>638</strain>
    </source>
</reference>
<gene>
    <name evidence="1" type="primary">pyrI</name>
    <name type="ordered locus">Ent638_0446</name>
</gene>
<dbReference type="EMBL" id="CP000653">
    <property type="protein sequence ID" value="ABP59134.1"/>
    <property type="molecule type" value="Genomic_DNA"/>
</dbReference>
<dbReference type="RefSeq" id="WP_012015859.1">
    <property type="nucleotide sequence ID" value="NC_009436.1"/>
</dbReference>
<dbReference type="SMR" id="A4W604"/>
<dbReference type="STRING" id="399742.Ent638_0446"/>
<dbReference type="KEGG" id="ent:Ent638_0446"/>
<dbReference type="eggNOG" id="COG1781">
    <property type="taxonomic scope" value="Bacteria"/>
</dbReference>
<dbReference type="HOGENOM" id="CLU_128576_0_0_6"/>
<dbReference type="OrthoDB" id="5599321at2"/>
<dbReference type="Proteomes" id="UP000000230">
    <property type="component" value="Chromosome"/>
</dbReference>
<dbReference type="GO" id="GO:0009347">
    <property type="term" value="C:aspartate carbamoyltransferase complex"/>
    <property type="evidence" value="ECO:0007669"/>
    <property type="project" value="InterPro"/>
</dbReference>
<dbReference type="GO" id="GO:0046872">
    <property type="term" value="F:metal ion binding"/>
    <property type="evidence" value="ECO:0007669"/>
    <property type="project" value="UniProtKB-KW"/>
</dbReference>
<dbReference type="GO" id="GO:0006207">
    <property type="term" value="P:'de novo' pyrimidine nucleobase biosynthetic process"/>
    <property type="evidence" value="ECO:0007669"/>
    <property type="project" value="InterPro"/>
</dbReference>
<dbReference type="GO" id="GO:0006221">
    <property type="term" value="P:pyrimidine nucleotide biosynthetic process"/>
    <property type="evidence" value="ECO:0007669"/>
    <property type="project" value="UniProtKB-UniRule"/>
</dbReference>
<dbReference type="FunFam" id="2.30.30.20:FF:000001">
    <property type="entry name" value="Aspartate carbamoyltransferase regulatory chain"/>
    <property type="match status" value="1"/>
</dbReference>
<dbReference type="FunFam" id="3.30.70.140:FF:000001">
    <property type="entry name" value="Aspartate carbamoyltransferase regulatory chain"/>
    <property type="match status" value="1"/>
</dbReference>
<dbReference type="Gene3D" id="2.30.30.20">
    <property type="entry name" value="Aspartate carbamoyltransferase regulatory subunit, C-terminal domain"/>
    <property type="match status" value="1"/>
</dbReference>
<dbReference type="Gene3D" id="3.30.70.140">
    <property type="entry name" value="Aspartate carbamoyltransferase regulatory subunit, N-terminal domain"/>
    <property type="match status" value="1"/>
</dbReference>
<dbReference type="HAMAP" id="MF_00002">
    <property type="entry name" value="Asp_carb_tr_reg"/>
    <property type="match status" value="1"/>
</dbReference>
<dbReference type="InterPro" id="IPR020545">
    <property type="entry name" value="Asp_carbamoyltransf_reg_N"/>
</dbReference>
<dbReference type="InterPro" id="IPR002801">
    <property type="entry name" value="Asp_carbamoylTrfase_reg"/>
</dbReference>
<dbReference type="InterPro" id="IPR020542">
    <property type="entry name" value="Asp_carbamoyltrfase_reg_C"/>
</dbReference>
<dbReference type="InterPro" id="IPR036792">
    <property type="entry name" value="Asp_carbatrfase_reg_C_sf"/>
</dbReference>
<dbReference type="InterPro" id="IPR036793">
    <property type="entry name" value="Asp_carbatrfase_reg_N_sf"/>
</dbReference>
<dbReference type="NCBIfam" id="TIGR00240">
    <property type="entry name" value="ATCase_reg"/>
    <property type="match status" value="1"/>
</dbReference>
<dbReference type="PANTHER" id="PTHR35805">
    <property type="entry name" value="ASPARTATE CARBAMOYLTRANSFERASE REGULATORY CHAIN"/>
    <property type="match status" value="1"/>
</dbReference>
<dbReference type="PANTHER" id="PTHR35805:SF1">
    <property type="entry name" value="ASPARTATE CARBAMOYLTRANSFERASE REGULATORY CHAIN"/>
    <property type="match status" value="1"/>
</dbReference>
<dbReference type="Pfam" id="PF01948">
    <property type="entry name" value="PyrI"/>
    <property type="match status" value="1"/>
</dbReference>
<dbReference type="Pfam" id="PF02748">
    <property type="entry name" value="PyrI_C"/>
    <property type="match status" value="1"/>
</dbReference>
<dbReference type="SUPFAM" id="SSF57825">
    <property type="entry name" value="Aspartate carbamoyltransferase, Regulatory-chain, C-terminal domain"/>
    <property type="match status" value="1"/>
</dbReference>
<dbReference type="SUPFAM" id="SSF54893">
    <property type="entry name" value="Aspartate carbamoyltransferase, Regulatory-chain, N-terminal domain"/>
    <property type="match status" value="1"/>
</dbReference>
<organism>
    <name type="scientific">Enterobacter sp. (strain 638)</name>
    <dbReference type="NCBI Taxonomy" id="399742"/>
    <lineage>
        <taxon>Bacteria</taxon>
        <taxon>Pseudomonadati</taxon>
        <taxon>Pseudomonadota</taxon>
        <taxon>Gammaproteobacteria</taxon>
        <taxon>Enterobacterales</taxon>
        <taxon>Enterobacteriaceae</taxon>
        <taxon>Enterobacter</taxon>
    </lineage>
</organism>
<evidence type="ECO:0000255" key="1">
    <source>
        <dbReference type="HAMAP-Rule" id="MF_00002"/>
    </source>
</evidence>
<protein>
    <recommendedName>
        <fullName evidence="1">Aspartate carbamoyltransferase regulatory chain</fullName>
    </recommendedName>
</protein>
<proteinExistence type="inferred from homology"/>
<name>PYRI_ENT38</name>
<accession>A4W604</accession>
<sequence length="153" mass="17259">MTHDNKLQVEAIKRGTVIDHIPAQIGFKLLTLFKLTETDQRITIGLNLPSGEMGRKDLIKIENTFLTDEQVNQLSLYAPDATVNRIDDYEVVGKSRPNLPERIDTVLVCPNSNCISHAEPVSSSFAVKKREKDIALKCKYCEKEFSHYVVLAN</sequence>